<evidence type="ECO:0000255" key="1">
    <source>
        <dbReference type="HAMAP-Rule" id="MF_00394"/>
    </source>
</evidence>
<keyword id="KW-0963">Cytoplasm</keyword>
<keyword id="KW-0444">Lipid biosynthesis</keyword>
<keyword id="KW-0443">Lipid metabolism</keyword>
<keyword id="KW-0520">NAD</keyword>
<keyword id="KW-0521">NADP</keyword>
<keyword id="KW-0547">Nucleotide-binding</keyword>
<keyword id="KW-0560">Oxidoreductase</keyword>
<keyword id="KW-0594">Phospholipid biosynthesis</keyword>
<keyword id="KW-1208">Phospholipid metabolism</keyword>
<feature type="chain" id="PRO_1000049475" description="Glycerol-3-phosphate dehydrogenase [NAD(P)+]">
    <location>
        <begin position="1"/>
        <end position="342"/>
    </location>
</feature>
<feature type="active site" description="Proton acceptor" evidence="1">
    <location>
        <position position="198"/>
    </location>
</feature>
<feature type="binding site" evidence="1">
    <location>
        <position position="11"/>
    </location>
    <ligand>
        <name>NADPH</name>
        <dbReference type="ChEBI" id="CHEBI:57783"/>
    </ligand>
</feature>
<feature type="binding site" evidence="1">
    <location>
        <position position="33"/>
    </location>
    <ligand>
        <name>NADPH</name>
        <dbReference type="ChEBI" id="CHEBI:57783"/>
    </ligand>
</feature>
<feature type="binding site" evidence="1">
    <location>
        <position position="107"/>
    </location>
    <ligand>
        <name>NADPH</name>
        <dbReference type="ChEBI" id="CHEBI:57783"/>
    </ligand>
</feature>
<feature type="binding site" evidence="1">
    <location>
        <position position="107"/>
    </location>
    <ligand>
        <name>sn-glycerol 3-phosphate</name>
        <dbReference type="ChEBI" id="CHEBI:57597"/>
    </ligand>
</feature>
<feature type="binding site" evidence="1">
    <location>
        <position position="143"/>
    </location>
    <ligand>
        <name>sn-glycerol 3-phosphate</name>
        <dbReference type="ChEBI" id="CHEBI:57597"/>
    </ligand>
</feature>
<feature type="binding site" evidence="1">
    <location>
        <position position="145"/>
    </location>
    <ligand>
        <name>sn-glycerol 3-phosphate</name>
        <dbReference type="ChEBI" id="CHEBI:57597"/>
    </ligand>
</feature>
<feature type="binding site" evidence="1">
    <location>
        <position position="147"/>
    </location>
    <ligand>
        <name>NADPH</name>
        <dbReference type="ChEBI" id="CHEBI:57783"/>
    </ligand>
</feature>
<feature type="binding site" evidence="1">
    <location>
        <position position="198"/>
    </location>
    <ligand>
        <name>sn-glycerol 3-phosphate</name>
        <dbReference type="ChEBI" id="CHEBI:57597"/>
    </ligand>
</feature>
<feature type="binding site" evidence="1">
    <location>
        <position position="251"/>
    </location>
    <ligand>
        <name>sn-glycerol 3-phosphate</name>
        <dbReference type="ChEBI" id="CHEBI:57597"/>
    </ligand>
</feature>
<feature type="binding site" evidence="1">
    <location>
        <position position="261"/>
    </location>
    <ligand>
        <name>sn-glycerol 3-phosphate</name>
        <dbReference type="ChEBI" id="CHEBI:57597"/>
    </ligand>
</feature>
<feature type="binding site" evidence="1">
    <location>
        <position position="262"/>
    </location>
    <ligand>
        <name>NADPH</name>
        <dbReference type="ChEBI" id="CHEBI:57783"/>
    </ligand>
</feature>
<feature type="binding site" evidence="1">
    <location>
        <position position="262"/>
    </location>
    <ligand>
        <name>sn-glycerol 3-phosphate</name>
        <dbReference type="ChEBI" id="CHEBI:57597"/>
    </ligand>
</feature>
<feature type="binding site" evidence="1">
    <location>
        <position position="263"/>
    </location>
    <ligand>
        <name>sn-glycerol 3-phosphate</name>
        <dbReference type="ChEBI" id="CHEBI:57597"/>
    </ligand>
</feature>
<feature type="binding site" evidence="1">
    <location>
        <position position="286"/>
    </location>
    <ligand>
        <name>NADPH</name>
        <dbReference type="ChEBI" id="CHEBI:57783"/>
    </ligand>
</feature>
<feature type="binding site" evidence="1">
    <location>
        <position position="288"/>
    </location>
    <ligand>
        <name>NADPH</name>
        <dbReference type="ChEBI" id="CHEBI:57783"/>
    </ligand>
</feature>
<protein>
    <recommendedName>
        <fullName evidence="1">Glycerol-3-phosphate dehydrogenase [NAD(P)+]</fullName>
        <ecNumber evidence="1">1.1.1.94</ecNumber>
    </recommendedName>
    <alternativeName>
        <fullName evidence="1">NAD(P)(+)-dependent glycerol-3-phosphate dehydrogenase</fullName>
    </alternativeName>
    <alternativeName>
        <fullName evidence="1">NAD(P)H-dependent dihydroxyacetone-phosphate reductase</fullName>
    </alternativeName>
</protein>
<proteinExistence type="inferred from homology"/>
<comment type="function">
    <text evidence="1">Catalyzes the reduction of the glycolytic intermediate dihydroxyacetone phosphate (DHAP) to sn-glycerol 3-phosphate (G3P), the key precursor for phospholipid synthesis.</text>
</comment>
<comment type="catalytic activity">
    <reaction evidence="1">
        <text>sn-glycerol 3-phosphate + NAD(+) = dihydroxyacetone phosphate + NADH + H(+)</text>
        <dbReference type="Rhea" id="RHEA:11092"/>
        <dbReference type="ChEBI" id="CHEBI:15378"/>
        <dbReference type="ChEBI" id="CHEBI:57540"/>
        <dbReference type="ChEBI" id="CHEBI:57597"/>
        <dbReference type="ChEBI" id="CHEBI:57642"/>
        <dbReference type="ChEBI" id="CHEBI:57945"/>
        <dbReference type="EC" id="1.1.1.94"/>
    </reaction>
    <physiologicalReaction direction="right-to-left" evidence="1">
        <dbReference type="Rhea" id="RHEA:11094"/>
    </physiologicalReaction>
</comment>
<comment type="catalytic activity">
    <reaction evidence="1">
        <text>sn-glycerol 3-phosphate + NADP(+) = dihydroxyacetone phosphate + NADPH + H(+)</text>
        <dbReference type="Rhea" id="RHEA:11096"/>
        <dbReference type="ChEBI" id="CHEBI:15378"/>
        <dbReference type="ChEBI" id="CHEBI:57597"/>
        <dbReference type="ChEBI" id="CHEBI:57642"/>
        <dbReference type="ChEBI" id="CHEBI:57783"/>
        <dbReference type="ChEBI" id="CHEBI:58349"/>
        <dbReference type="EC" id="1.1.1.94"/>
    </reaction>
    <physiologicalReaction direction="right-to-left" evidence="1">
        <dbReference type="Rhea" id="RHEA:11098"/>
    </physiologicalReaction>
</comment>
<comment type="pathway">
    <text evidence="1">Membrane lipid metabolism; glycerophospholipid metabolism.</text>
</comment>
<comment type="subcellular location">
    <subcellularLocation>
        <location evidence="1">Cytoplasm</location>
    </subcellularLocation>
</comment>
<comment type="similarity">
    <text evidence="1">Belongs to the NAD-dependent glycerol-3-phosphate dehydrogenase family.</text>
</comment>
<dbReference type="EC" id="1.1.1.94" evidence="1"/>
<dbReference type="EMBL" id="CP000512">
    <property type="protein sequence ID" value="ABM34399.1"/>
    <property type="molecule type" value="Genomic_DNA"/>
</dbReference>
<dbReference type="RefSeq" id="WP_011796886.1">
    <property type="nucleotide sequence ID" value="NC_008752.1"/>
</dbReference>
<dbReference type="SMR" id="A1TTW1"/>
<dbReference type="STRING" id="397945.Aave_3854"/>
<dbReference type="KEGG" id="aav:Aave_3854"/>
<dbReference type="eggNOG" id="COG0240">
    <property type="taxonomic scope" value="Bacteria"/>
</dbReference>
<dbReference type="HOGENOM" id="CLU_033449_0_2_4"/>
<dbReference type="OrthoDB" id="9812273at2"/>
<dbReference type="UniPathway" id="UPA00940"/>
<dbReference type="Proteomes" id="UP000002596">
    <property type="component" value="Chromosome"/>
</dbReference>
<dbReference type="GO" id="GO:0005829">
    <property type="term" value="C:cytosol"/>
    <property type="evidence" value="ECO:0007669"/>
    <property type="project" value="TreeGrafter"/>
</dbReference>
<dbReference type="GO" id="GO:0047952">
    <property type="term" value="F:glycerol-3-phosphate dehydrogenase [NAD(P)+] activity"/>
    <property type="evidence" value="ECO:0007669"/>
    <property type="project" value="UniProtKB-UniRule"/>
</dbReference>
<dbReference type="GO" id="GO:0051287">
    <property type="term" value="F:NAD binding"/>
    <property type="evidence" value="ECO:0007669"/>
    <property type="project" value="InterPro"/>
</dbReference>
<dbReference type="GO" id="GO:0005975">
    <property type="term" value="P:carbohydrate metabolic process"/>
    <property type="evidence" value="ECO:0007669"/>
    <property type="project" value="InterPro"/>
</dbReference>
<dbReference type="GO" id="GO:0046167">
    <property type="term" value="P:glycerol-3-phosphate biosynthetic process"/>
    <property type="evidence" value="ECO:0007669"/>
    <property type="project" value="UniProtKB-UniRule"/>
</dbReference>
<dbReference type="GO" id="GO:0046168">
    <property type="term" value="P:glycerol-3-phosphate catabolic process"/>
    <property type="evidence" value="ECO:0007669"/>
    <property type="project" value="InterPro"/>
</dbReference>
<dbReference type="GO" id="GO:0006650">
    <property type="term" value="P:glycerophospholipid metabolic process"/>
    <property type="evidence" value="ECO:0007669"/>
    <property type="project" value="UniProtKB-UniRule"/>
</dbReference>
<dbReference type="GO" id="GO:0008654">
    <property type="term" value="P:phospholipid biosynthetic process"/>
    <property type="evidence" value="ECO:0007669"/>
    <property type="project" value="UniProtKB-KW"/>
</dbReference>
<dbReference type="FunFam" id="1.10.1040.10:FF:000001">
    <property type="entry name" value="Glycerol-3-phosphate dehydrogenase [NAD(P)+]"/>
    <property type="match status" value="1"/>
</dbReference>
<dbReference type="Gene3D" id="1.10.1040.10">
    <property type="entry name" value="N-(1-d-carboxylethyl)-l-norvaline Dehydrogenase, domain 2"/>
    <property type="match status" value="1"/>
</dbReference>
<dbReference type="Gene3D" id="3.40.50.720">
    <property type="entry name" value="NAD(P)-binding Rossmann-like Domain"/>
    <property type="match status" value="1"/>
</dbReference>
<dbReference type="HAMAP" id="MF_00394">
    <property type="entry name" value="NAD_Glyc3P_dehydrog"/>
    <property type="match status" value="1"/>
</dbReference>
<dbReference type="InterPro" id="IPR008927">
    <property type="entry name" value="6-PGluconate_DH-like_C_sf"/>
</dbReference>
<dbReference type="InterPro" id="IPR013328">
    <property type="entry name" value="6PGD_dom2"/>
</dbReference>
<dbReference type="InterPro" id="IPR006168">
    <property type="entry name" value="G3P_DH_NAD-dep"/>
</dbReference>
<dbReference type="InterPro" id="IPR006109">
    <property type="entry name" value="G3P_DH_NAD-dep_C"/>
</dbReference>
<dbReference type="InterPro" id="IPR011128">
    <property type="entry name" value="G3P_DH_NAD-dep_N"/>
</dbReference>
<dbReference type="InterPro" id="IPR036291">
    <property type="entry name" value="NAD(P)-bd_dom_sf"/>
</dbReference>
<dbReference type="NCBIfam" id="NF000940">
    <property type="entry name" value="PRK00094.1-2"/>
    <property type="match status" value="1"/>
</dbReference>
<dbReference type="NCBIfam" id="NF000942">
    <property type="entry name" value="PRK00094.1-4"/>
    <property type="match status" value="1"/>
</dbReference>
<dbReference type="PANTHER" id="PTHR11728">
    <property type="entry name" value="GLYCEROL-3-PHOSPHATE DEHYDROGENASE"/>
    <property type="match status" value="1"/>
</dbReference>
<dbReference type="PANTHER" id="PTHR11728:SF1">
    <property type="entry name" value="GLYCEROL-3-PHOSPHATE DEHYDROGENASE [NAD(+)] 2, CHLOROPLASTIC"/>
    <property type="match status" value="1"/>
</dbReference>
<dbReference type="Pfam" id="PF07479">
    <property type="entry name" value="NAD_Gly3P_dh_C"/>
    <property type="match status" value="1"/>
</dbReference>
<dbReference type="Pfam" id="PF01210">
    <property type="entry name" value="NAD_Gly3P_dh_N"/>
    <property type="match status" value="1"/>
</dbReference>
<dbReference type="PIRSF" id="PIRSF000114">
    <property type="entry name" value="Glycerol-3-P_dh"/>
    <property type="match status" value="1"/>
</dbReference>
<dbReference type="PRINTS" id="PR00077">
    <property type="entry name" value="GPDHDRGNASE"/>
</dbReference>
<dbReference type="SUPFAM" id="SSF48179">
    <property type="entry name" value="6-phosphogluconate dehydrogenase C-terminal domain-like"/>
    <property type="match status" value="1"/>
</dbReference>
<dbReference type="SUPFAM" id="SSF51735">
    <property type="entry name" value="NAD(P)-binding Rossmann-fold domains"/>
    <property type="match status" value="1"/>
</dbReference>
<dbReference type="PROSITE" id="PS00957">
    <property type="entry name" value="NAD_G3PDH"/>
    <property type="match status" value="1"/>
</dbReference>
<name>GPDA_PARC0</name>
<organism>
    <name type="scientific">Paracidovorax citrulli (strain AAC00-1)</name>
    <name type="common">Acidovorax citrulli</name>
    <dbReference type="NCBI Taxonomy" id="397945"/>
    <lineage>
        <taxon>Bacteria</taxon>
        <taxon>Pseudomonadati</taxon>
        <taxon>Pseudomonadota</taxon>
        <taxon>Betaproteobacteria</taxon>
        <taxon>Burkholderiales</taxon>
        <taxon>Comamonadaceae</taxon>
        <taxon>Paracidovorax</taxon>
    </lineage>
</organism>
<gene>
    <name evidence="1" type="primary">gpsA</name>
    <name type="ordered locus">Aave_3854</name>
</gene>
<accession>A1TTW1</accession>
<sequence length="342" mass="34938">MKIIVFGAGAWGTAMALSAAAHPAGHAVTLWARDGRQADAMQAARQNARYLPGIAFPAALALASGAPSGALASCRADLAIVATPMSGLRGMLEELRDATIPVAWLCKGFEAVPAGGETAAQGLMAHEICSQVAPRLRAGALSGPSFALEAAQGRPTALVAASRDAHVRELLVEAFHGPTLRVYANEDIVGVEVGGAVKNVLAIATGLCDGLDLGTNARAALITRGLAEMSRLGLALGARAETFMGLSGLGDLVLTATGDLSRNRRVGLALARGLTLDQAVESLGHVAEGVYSARTVVRRAGQLGVDMPIAREVVALLDGRSTASDAVARLMGRSPAAELRSC</sequence>
<reference key="1">
    <citation type="submission" date="2006-12" db="EMBL/GenBank/DDBJ databases">
        <title>Complete sequence of Acidovorax avenae subsp. citrulli AAC00-1.</title>
        <authorList>
            <person name="Copeland A."/>
            <person name="Lucas S."/>
            <person name="Lapidus A."/>
            <person name="Barry K."/>
            <person name="Detter J.C."/>
            <person name="Glavina del Rio T."/>
            <person name="Dalin E."/>
            <person name="Tice H."/>
            <person name="Pitluck S."/>
            <person name="Kiss H."/>
            <person name="Brettin T."/>
            <person name="Bruce D."/>
            <person name="Han C."/>
            <person name="Tapia R."/>
            <person name="Gilna P."/>
            <person name="Schmutz J."/>
            <person name="Larimer F."/>
            <person name="Land M."/>
            <person name="Hauser L."/>
            <person name="Kyrpides N."/>
            <person name="Kim E."/>
            <person name="Stahl D."/>
            <person name="Richardson P."/>
        </authorList>
    </citation>
    <scope>NUCLEOTIDE SEQUENCE [LARGE SCALE GENOMIC DNA]</scope>
    <source>
        <strain>AAC00-1</strain>
    </source>
</reference>